<evidence type="ECO:0000255" key="1">
    <source>
        <dbReference type="HAMAP-Rule" id="MF_01395"/>
    </source>
</evidence>
<evidence type="ECO:0000255" key="2">
    <source>
        <dbReference type="PROSITE-ProRule" id="PRU01136"/>
    </source>
</evidence>
<reference key="1">
    <citation type="submission" date="2006-03" db="EMBL/GenBank/DDBJ databases">
        <title>Complete sequence of Methylobacillus flagellatus KT.</title>
        <authorList>
            <consortium name="US DOE Joint Genome Institute"/>
            <person name="Copeland A."/>
            <person name="Lucas S."/>
            <person name="Lapidus A."/>
            <person name="Barry K."/>
            <person name="Detter J.C."/>
            <person name="Glavina del Rio T."/>
            <person name="Hammon N."/>
            <person name="Israni S."/>
            <person name="Dalin E."/>
            <person name="Tice H."/>
            <person name="Pitluck S."/>
            <person name="Brettin T."/>
            <person name="Bruce D."/>
            <person name="Han C."/>
            <person name="Tapia R."/>
            <person name="Saunders E."/>
            <person name="Gilna P."/>
            <person name="Schmutz J."/>
            <person name="Larimer F."/>
            <person name="Land M."/>
            <person name="Kyrpides N."/>
            <person name="Anderson I."/>
            <person name="Richardson P."/>
        </authorList>
    </citation>
    <scope>NUCLEOTIDE SEQUENCE [LARGE SCALE GENOMIC DNA]</scope>
    <source>
        <strain>ATCC 51484 / DSM 6875 / VKM B-1610 / KT</strain>
    </source>
</reference>
<comment type="function">
    <text evidence="1">Component of the acetyl coenzyme A carboxylase (ACC) complex. Biotin carboxylase (BC) catalyzes the carboxylation of biotin on its carrier protein (BCCP) and then the CO(2) group is transferred by the transcarboxylase to acetyl-CoA to form malonyl-CoA.</text>
</comment>
<comment type="catalytic activity">
    <reaction evidence="1">
        <text>N(6)-carboxybiotinyl-L-lysyl-[protein] + acetyl-CoA = N(6)-biotinyl-L-lysyl-[protein] + malonyl-CoA</text>
        <dbReference type="Rhea" id="RHEA:54728"/>
        <dbReference type="Rhea" id="RHEA-COMP:10505"/>
        <dbReference type="Rhea" id="RHEA-COMP:10506"/>
        <dbReference type="ChEBI" id="CHEBI:57288"/>
        <dbReference type="ChEBI" id="CHEBI:57384"/>
        <dbReference type="ChEBI" id="CHEBI:83144"/>
        <dbReference type="ChEBI" id="CHEBI:83145"/>
        <dbReference type="EC" id="2.1.3.15"/>
    </reaction>
</comment>
<comment type="cofactor">
    <cofactor evidence="1">
        <name>Zn(2+)</name>
        <dbReference type="ChEBI" id="CHEBI:29105"/>
    </cofactor>
    <text evidence="1">Binds 1 zinc ion per subunit.</text>
</comment>
<comment type="pathway">
    <text evidence="1">Lipid metabolism; malonyl-CoA biosynthesis; malonyl-CoA from acetyl-CoA: step 1/1.</text>
</comment>
<comment type="subunit">
    <text evidence="1">Acetyl-CoA carboxylase is a heterohexamer composed of biotin carboxyl carrier protein (AccB), biotin carboxylase (AccC) and two subunits each of ACCase subunit alpha (AccA) and ACCase subunit beta (AccD).</text>
</comment>
<comment type="subcellular location">
    <subcellularLocation>
        <location evidence="1">Cytoplasm</location>
    </subcellularLocation>
</comment>
<comment type="similarity">
    <text evidence="1">Belongs to the AccD/PCCB family.</text>
</comment>
<keyword id="KW-0067">ATP-binding</keyword>
<keyword id="KW-0963">Cytoplasm</keyword>
<keyword id="KW-0275">Fatty acid biosynthesis</keyword>
<keyword id="KW-0276">Fatty acid metabolism</keyword>
<keyword id="KW-0444">Lipid biosynthesis</keyword>
<keyword id="KW-0443">Lipid metabolism</keyword>
<keyword id="KW-0479">Metal-binding</keyword>
<keyword id="KW-0547">Nucleotide-binding</keyword>
<keyword id="KW-1185">Reference proteome</keyword>
<keyword id="KW-0808">Transferase</keyword>
<keyword id="KW-0862">Zinc</keyword>
<keyword id="KW-0863">Zinc-finger</keyword>
<gene>
    <name evidence="1" type="primary">accD</name>
    <name type="ordered locus">Mfla_1696</name>
</gene>
<accession>Q1H0M3</accession>
<feature type="chain" id="PRO_0000359009" description="Acetyl-coenzyme A carboxylase carboxyl transferase subunit beta">
    <location>
        <begin position="1"/>
        <end position="289"/>
    </location>
</feature>
<feature type="domain" description="CoA carboxyltransferase N-terminal" evidence="2">
    <location>
        <begin position="27"/>
        <end position="289"/>
    </location>
</feature>
<feature type="zinc finger region" description="C4-type" evidence="1">
    <location>
        <begin position="31"/>
        <end position="53"/>
    </location>
</feature>
<feature type="binding site" evidence="1">
    <location>
        <position position="31"/>
    </location>
    <ligand>
        <name>Zn(2+)</name>
        <dbReference type="ChEBI" id="CHEBI:29105"/>
    </ligand>
</feature>
<feature type="binding site" evidence="1">
    <location>
        <position position="34"/>
    </location>
    <ligand>
        <name>Zn(2+)</name>
        <dbReference type="ChEBI" id="CHEBI:29105"/>
    </ligand>
</feature>
<feature type="binding site" evidence="1">
    <location>
        <position position="50"/>
    </location>
    <ligand>
        <name>Zn(2+)</name>
        <dbReference type="ChEBI" id="CHEBI:29105"/>
    </ligand>
</feature>
<feature type="binding site" evidence="1">
    <location>
        <position position="53"/>
    </location>
    <ligand>
        <name>Zn(2+)</name>
        <dbReference type="ChEBI" id="CHEBI:29105"/>
    </ligand>
</feature>
<dbReference type="EC" id="2.1.3.15" evidence="1"/>
<dbReference type="EMBL" id="CP000284">
    <property type="protein sequence ID" value="ABE49964.1"/>
    <property type="molecule type" value="Genomic_DNA"/>
</dbReference>
<dbReference type="RefSeq" id="WP_011479918.1">
    <property type="nucleotide sequence ID" value="NC_007947.1"/>
</dbReference>
<dbReference type="SMR" id="Q1H0M3"/>
<dbReference type="STRING" id="265072.Mfla_1696"/>
<dbReference type="KEGG" id="mfa:Mfla_1696"/>
<dbReference type="eggNOG" id="COG0777">
    <property type="taxonomic scope" value="Bacteria"/>
</dbReference>
<dbReference type="HOGENOM" id="CLU_015486_1_0_4"/>
<dbReference type="OrthoDB" id="9772975at2"/>
<dbReference type="UniPathway" id="UPA00655">
    <property type="reaction ID" value="UER00711"/>
</dbReference>
<dbReference type="Proteomes" id="UP000002440">
    <property type="component" value="Chromosome"/>
</dbReference>
<dbReference type="GO" id="GO:0009329">
    <property type="term" value="C:acetate CoA-transferase complex"/>
    <property type="evidence" value="ECO:0007669"/>
    <property type="project" value="TreeGrafter"/>
</dbReference>
<dbReference type="GO" id="GO:0003989">
    <property type="term" value="F:acetyl-CoA carboxylase activity"/>
    <property type="evidence" value="ECO:0007669"/>
    <property type="project" value="InterPro"/>
</dbReference>
<dbReference type="GO" id="GO:0005524">
    <property type="term" value="F:ATP binding"/>
    <property type="evidence" value="ECO:0007669"/>
    <property type="project" value="UniProtKB-KW"/>
</dbReference>
<dbReference type="GO" id="GO:0016743">
    <property type="term" value="F:carboxyl- or carbamoyltransferase activity"/>
    <property type="evidence" value="ECO:0007669"/>
    <property type="project" value="UniProtKB-UniRule"/>
</dbReference>
<dbReference type="GO" id="GO:0008270">
    <property type="term" value="F:zinc ion binding"/>
    <property type="evidence" value="ECO:0007669"/>
    <property type="project" value="UniProtKB-UniRule"/>
</dbReference>
<dbReference type="GO" id="GO:0006633">
    <property type="term" value="P:fatty acid biosynthetic process"/>
    <property type="evidence" value="ECO:0007669"/>
    <property type="project" value="UniProtKB-KW"/>
</dbReference>
<dbReference type="GO" id="GO:2001295">
    <property type="term" value="P:malonyl-CoA biosynthetic process"/>
    <property type="evidence" value="ECO:0007669"/>
    <property type="project" value="UniProtKB-UniRule"/>
</dbReference>
<dbReference type="Gene3D" id="3.90.226.10">
    <property type="entry name" value="2-enoyl-CoA Hydratase, Chain A, domain 1"/>
    <property type="match status" value="1"/>
</dbReference>
<dbReference type="HAMAP" id="MF_01395">
    <property type="entry name" value="AcetylCoA_CT_beta"/>
    <property type="match status" value="1"/>
</dbReference>
<dbReference type="InterPro" id="IPR034733">
    <property type="entry name" value="AcCoA_carboxyl_beta"/>
</dbReference>
<dbReference type="InterPro" id="IPR000438">
    <property type="entry name" value="Acetyl_CoA_COase_Trfase_b_su"/>
</dbReference>
<dbReference type="InterPro" id="IPR029045">
    <property type="entry name" value="ClpP/crotonase-like_dom_sf"/>
</dbReference>
<dbReference type="InterPro" id="IPR011762">
    <property type="entry name" value="COA_CT_N"/>
</dbReference>
<dbReference type="InterPro" id="IPR041010">
    <property type="entry name" value="Znf-ACC"/>
</dbReference>
<dbReference type="NCBIfam" id="TIGR00515">
    <property type="entry name" value="accD"/>
    <property type="match status" value="1"/>
</dbReference>
<dbReference type="PANTHER" id="PTHR42995">
    <property type="entry name" value="ACETYL-COENZYME A CARBOXYLASE CARBOXYL TRANSFERASE SUBUNIT BETA, CHLOROPLASTIC"/>
    <property type="match status" value="1"/>
</dbReference>
<dbReference type="PANTHER" id="PTHR42995:SF5">
    <property type="entry name" value="ACETYL-COENZYME A CARBOXYLASE CARBOXYL TRANSFERASE SUBUNIT BETA, CHLOROPLASTIC"/>
    <property type="match status" value="1"/>
</dbReference>
<dbReference type="Pfam" id="PF01039">
    <property type="entry name" value="Carboxyl_trans"/>
    <property type="match status" value="1"/>
</dbReference>
<dbReference type="Pfam" id="PF17848">
    <property type="entry name" value="Zn_ribbon_ACC"/>
    <property type="match status" value="1"/>
</dbReference>
<dbReference type="PRINTS" id="PR01070">
    <property type="entry name" value="ACCCTRFRASEB"/>
</dbReference>
<dbReference type="SUPFAM" id="SSF52096">
    <property type="entry name" value="ClpP/crotonase"/>
    <property type="match status" value="1"/>
</dbReference>
<dbReference type="PROSITE" id="PS50980">
    <property type="entry name" value="COA_CT_NTER"/>
    <property type="match status" value="1"/>
</dbReference>
<proteinExistence type="inferred from homology"/>
<sequence>MSWLQKLLPPKINRPAGNSRKTVPEGLWSKCPSCESVLYRTDLESNSEVCPKCSYHNRISARTRLNFLLDAEGRSEIGMEVQPVDPLKFKDSKRYIDRLKTTQAEVGETDALIVMQGSIKAVGVVAAAFEFKFMGGSMGSVVGERFVRGVQAAIDNNTPFICVSASGGARMQEGMFSLMQMAKTSAALTRLSKAGLPYISVLTDPTMGGVSASFAMLGDVIIAEPQALIGFAGPRVIEQTVRETLPEGFQRSEFLLEHGAIDMIVDRREMRDKLATLMTSFMRVPAGAA</sequence>
<protein>
    <recommendedName>
        <fullName evidence="1">Acetyl-coenzyme A carboxylase carboxyl transferase subunit beta</fullName>
        <shortName evidence="1">ACCase subunit beta</shortName>
        <shortName evidence="1">Acetyl-CoA carboxylase carboxyltransferase subunit beta</shortName>
        <ecNumber evidence="1">2.1.3.15</ecNumber>
    </recommendedName>
</protein>
<name>ACCD_METFK</name>
<organism>
    <name type="scientific">Methylobacillus flagellatus (strain ATCC 51484 / DSM 6875 / VKM B-1610 / KT)</name>
    <dbReference type="NCBI Taxonomy" id="265072"/>
    <lineage>
        <taxon>Bacteria</taxon>
        <taxon>Pseudomonadati</taxon>
        <taxon>Pseudomonadota</taxon>
        <taxon>Betaproteobacteria</taxon>
        <taxon>Nitrosomonadales</taxon>
        <taxon>Methylophilaceae</taxon>
        <taxon>Methylobacillus</taxon>
    </lineage>
</organism>